<keyword id="KW-0058">Aromatic hydrocarbons catabolism</keyword>
<keyword id="KW-0378">Hydrolase</keyword>
<keyword id="KW-1185">Reference proteome</keyword>
<feature type="chain" id="PRO_0000418470" description="Maleamate amidohydrolase">
    <location>
        <begin position="1"/>
        <end position="213"/>
    </location>
</feature>
<feature type="active site" description="Nucleophile" evidence="1">
    <location>
        <position position="154"/>
    </location>
</feature>
<name>NICF_PSEPK</name>
<reference key="1">
    <citation type="journal article" date="2002" name="Environ. Microbiol.">
        <title>Complete genome sequence and comparative analysis of the metabolically versatile Pseudomonas putida KT2440.</title>
        <authorList>
            <person name="Nelson K.E."/>
            <person name="Weinel C."/>
            <person name="Paulsen I.T."/>
            <person name="Dodson R.J."/>
            <person name="Hilbert H."/>
            <person name="Martins dos Santos V.A.P."/>
            <person name="Fouts D.E."/>
            <person name="Gill S.R."/>
            <person name="Pop M."/>
            <person name="Holmes M."/>
            <person name="Brinkac L.M."/>
            <person name="Beanan M.J."/>
            <person name="DeBoy R.T."/>
            <person name="Daugherty S.C."/>
            <person name="Kolonay J.F."/>
            <person name="Madupu R."/>
            <person name="Nelson W.C."/>
            <person name="White O."/>
            <person name="Peterson J.D."/>
            <person name="Khouri H.M."/>
            <person name="Hance I."/>
            <person name="Chris Lee P."/>
            <person name="Holtzapple E.K."/>
            <person name="Scanlan D."/>
            <person name="Tran K."/>
            <person name="Moazzez A."/>
            <person name="Utterback T.R."/>
            <person name="Rizzo M."/>
            <person name="Lee K."/>
            <person name="Kosack D."/>
            <person name="Moestl D."/>
            <person name="Wedler H."/>
            <person name="Lauber J."/>
            <person name="Stjepandic D."/>
            <person name="Hoheisel J."/>
            <person name="Straetz M."/>
            <person name="Heim S."/>
            <person name="Kiewitz C."/>
            <person name="Eisen J.A."/>
            <person name="Timmis K.N."/>
            <person name="Duesterhoeft A."/>
            <person name="Tuemmler B."/>
            <person name="Fraser C.M."/>
        </authorList>
    </citation>
    <scope>NUCLEOTIDE SEQUENCE [LARGE SCALE GENOMIC DNA]</scope>
    <source>
        <strain>ATCC 47054 / DSM 6125 / CFBP 8728 / NCIMB 11950 / KT2440</strain>
    </source>
</reference>
<reference key="2">
    <citation type="journal article" date="2008" name="Proc. Natl. Acad. Sci. U.S.A.">
        <title>Deciphering the genetic determinants for aerobic nicotinic acid degradation: the nic cluster from Pseudomonas putida KT2440.</title>
        <authorList>
            <person name="Jimenez J.I."/>
            <person name="Canales A."/>
            <person name="Jimenez-Barbero J."/>
            <person name="Ginalski K."/>
            <person name="Rychlewski L."/>
            <person name="Garcia J.L."/>
            <person name="Diaz E."/>
        </authorList>
    </citation>
    <scope>FUNCTION</scope>
    <scope>CATALYTIC ACTIVITY</scope>
    <scope>PATHWAY</scope>
    <scope>BIOPHYSICOCHEMICAL PROPERTIES</scope>
    <source>
        <strain>ATCC 47054 / DSM 6125 / CFBP 8728 / NCIMB 11950 / KT2440</strain>
    </source>
</reference>
<reference key="3">
    <citation type="journal article" date="2011" name="Environ. Microbiol.">
        <title>A finely tuned regulatory circuit of the nicotinic acid degradation pathway in Pseudomonas putida.</title>
        <authorList>
            <person name="Jimenez J.I."/>
            <person name="Juarez J.F."/>
            <person name="Garcia J.L."/>
            <person name="Diaz E."/>
        </authorList>
    </citation>
    <scope>INDUCTION</scope>
    <source>
        <strain>ATCC 47054 / DSM 6125 / CFBP 8728 / NCIMB 11950 / KT2440</strain>
    </source>
</reference>
<comment type="function">
    <text evidence="2">Maleamate amidase that transforms maleamate into maleate and ammonia in the aerobic nicotinate degradation pathway.</text>
</comment>
<comment type="catalytic activity">
    <reaction evidence="2">
        <text>maleamate + H2O = maleate + NH4(+)</text>
        <dbReference type="Rhea" id="RHEA:27385"/>
        <dbReference type="ChEBI" id="CHEBI:15377"/>
        <dbReference type="ChEBI" id="CHEBI:16146"/>
        <dbReference type="ChEBI" id="CHEBI:28938"/>
        <dbReference type="ChEBI" id="CHEBI:30780"/>
        <dbReference type="EC" id="3.5.1.107"/>
    </reaction>
</comment>
<comment type="biophysicochemical properties">
    <kinetics>
        <Vmax evidence="2">19.3 umol/min/mg enzyme</Vmax>
    </kinetics>
</comment>
<comment type="pathway">
    <text evidence="2">Cofactor degradation; nicotinate degradation.</text>
</comment>
<comment type="induction">
    <text evidence="3">Repressed by NicR in the absence of 6-hydroxynicotinate (6HNA) inducer. In presence of 6HNA, repression is alleviated.</text>
</comment>
<comment type="similarity">
    <text evidence="4">Belongs to the isochorismatase family.</text>
</comment>
<dbReference type="EC" id="3.5.1.107"/>
<dbReference type="EMBL" id="AE015451">
    <property type="protein sequence ID" value="AAN69535.1"/>
    <property type="molecule type" value="Genomic_DNA"/>
</dbReference>
<dbReference type="RefSeq" id="NP_746071.1">
    <property type="nucleotide sequence ID" value="NC_002947.4"/>
</dbReference>
<dbReference type="RefSeq" id="WP_003251109.1">
    <property type="nucleotide sequence ID" value="NZ_CP169744.1"/>
</dbReference>
<dbReference type="SMR" id="Q88FY5"/>
<dbReference type="STRING" id="160488.PP_3941"/>
<dbReference type="PaxDb" id="160488-PP_3941"/>
<dbReference type="KEGG" id="ppu:PP_3941"/>
<dbReference type="PATRIC" id="fig|160488.4.peg.4196"/>
<dbReference type="eggNOG" id="COG1335">
    <property type="taxonomic scope" value="Bacteria"/>
</dbReference>
<dbReference type="HOGENOM" id="CLU_068979_7_1_6"/>
<dbReference type="OrthoDB" id="5360912at2"/>
<dbReference type="PhylomeDB" id="Q88FY5"/>
<dbReference type="BioCyc" id="MetaCyc:G1G01-4206-MONOMER"/>
<dbReference type="BioCyc" id="PPUT160488:G1G01-4206-MONOMER"/>
<dbReference type="SABIO-RK" id="Q88FY5"/>
<dbReference type="UniPathway" id="UPA01010"/>
<dbReference type="Proteomes" id="UP000000556">
    <property type="component" value="Chromosome"/>
</dbReference>
<dbReference type="GO" id="GO:0016811">
    <property type="term" value="F:hydrolase activity, acting on carbon-nitrogen (but not peptide) bonds, in linear amides"/>
    <property type="evidence" value="ECO:0000314"/>
    <property type="project" value="UniProtKB"/>
</dbReference>
<dbReference type="GO" id="GO:1901848">
    <property type="term" value="P:nicotinate catabolic process"/>
    <property type="evidence" value="ECO:0000314"/>
    <property type="project" value="UniProtKB"/>
</dbReference>
<dbReference type="CDD" id="cd01015">
    <property type="entry name" value="CSHase"/>
    <property type="match status" value="1"/>
</dbReference>
<dbReference type="FunFam" id="3.40.50.850:FF:000014">
    <property type="entry name" value="Maleamate amidohydrolase"/>
    <property type="match status" value="1"/>
</dbReference>
<dbReference type="Gene3D" id="3.40.50.850">
    <property type="entry name" value="Isochorismatase-like"/>
    <property type="match status" value="1"/>
</dbReference>
<dbReference type="InterPro" id="IPR000868">
    <property type="entry name" value="Isochorismatase-like_dom"/>
</dbReference>
<dbReference type="InterPro" id="IPR050272">
    <property type="entry name" value="Isochorismatase-like_hydrls"/>
</dbReference>
<dbReference type="InterPro" id="IPR036380">
    <property type="entry name" value="Isochorismatase-like_sf"/>
</dbReference>
<dbReference type="PANTHER" id="PTHR43540:SF1">
    <property type="entry name" value="ISOCHORISMATASE HYDROLASE"/>
    <property type="match status" value="1"/>
</dbReference>
<dbReference type="PANTHER" id="PTHR43540">
    <property type="entry name" value="PEROXYUREIDOACRYLATE/UREIDOACRYLATE AMIDOHYDROLASE-RELATED"/>
    <property type="match status" value="1"/>
</dbReference>
<dbReference type="Pfam" id="PF00857">
    <property type="entry name" value="Isochorismatase"/>
    <property type="match status" value="1"/>
</dbReference>
<dbReference type="SUPFAM" id="SSF52499">
    <property type="entry name" value="Isochorismatase-like hydrolases"/>
    <property type="match status" value="1"/>
</dbReference>
<sequence length="213" mass="22757">MSDAQSARDNYQGVWGQRIGFGRKPALLMIDFMQGYTTPGAPLYAPGVVAAVEQAAGLLALARDCGTLVVHTNIRYQPPHFADGGVWVRKAPVMKDMVEGNPLAAFCEAVAPQAGEVVLSKQYASAFFATSLAPLLHAQGVDTVVLAGCSTSGCIRASAVDAMQHGFRTIVVRECVGDRHSDPHEANLFDIDSKYGDVVTRQDAMQQLRHLAG</sequence>
<gene>
    <name type="primary">nicF</name>
    <name type="ordered locus">PP_3941</name>
</gene>
<organism>
    <name type="scientific">Pseudomonas putida (strain ATCC 47054 / DSM 6125 / CFBP 8728 / NCIMB 11950 / KT2440)</name>
    <dbReference type="NCBI Taxonomy" id="160488"/>
    <lineage>
        <taxon>Bacteria</taxon>
        <taxon>Pseudomonadati</taxon>
        <taxon>Pseudomonadota</taxon>
        <taxon>Gammaproteobacteria</taxon>
        <taxon>Pseudomonadales</taxon>
        <taxon>Pseudomonadaceae</taxon>
        <taxon>Pseudomonas</taxon>
    </lineage>
</organism>
<proteinExistence type="evidence at protein level"/>
<evidence type="ECO:0000250" key="1"/>
<evidence type="ECO:0000269" key="2">
    <source>
    </source>
</evidence>
<evidence type="ECO:0000269" key="3">
    <source>
    </source>
</evidence>
<evidence type="ECO:0000305" key="4"/>
<protein>
    <recommendedName>
        <fullName>Maleamate amidohydrolase</fullName>
        <ecNumber>3.5.1.107</ecNumber>
    </recommendedName>
    <alternativeName>
        <fullName>Nicotinate degradation protein F</fullName>
    </alternativeName>
</protein>
<accession>Q88FY5</accession>